<keyword id="KW-0963">Cytoplasm</keyword>
<keyword id="KW-0378">Hydrolase</keyword>
<keyword id="KW-0479">Metal-binding</keyword>
<keyword id="KW-0533">Nickel</keyword>
<keyword id="KW-1185">Reference proteome</keyword>
<accession>Q2SDQ1</accession>
<feature type="chain" id="PRO_0000239876" description="Urease subunit alpha">
    <location>
        <begin position="1"/>
        <end position="567"/>
    </location>
</feature>
<feature type="domain" description="Urease" evidence="1">
    <location>
        <begin position="129"/>
        <end position="567"/>
    </location>
</feature>
<feature type="active site" description="Proton donor" evidence="1">
    <location>
        <position position="320"/>
    </location>
</feature>
<feature type="binding site" evidence="1">
    <location>
        <position position="134"/>
    </location>
    <ligand>
        <name>Ni(2+)</name>
        <dbReference type="ChEBI" id="CHEBI:49786"/>
        <label>1</label>
    </ligand>
</feature>
<feature type="binding site" evidence="1">
    <location>
        <position position="136"/>
    </location>
    <ligand>
        <name>Ni(2+)</name>
        <dbReference type="ChEBI" id="CHEBI:49786"/>
        <label>1</label>
    </ligand>
</feature>
<feature type="binding site" description="via carbamate group" evidence="1">
    <location>
        <position position="217"/>
    </location>
    <ligand>
        <name>Ni(2+)</name>
        <dbReference type="ChEBI" id="CHEBI:49786"/>
        <label>1</label>
    </ligand>
</feature>
<feature type="binding site" description="via carbamate group" evidence="1">
    <location>
        <position position="217"/>
    </location>
    <ligand>
        <name>Ni(2+)</name>
        <dbReference type="ChEBI" id="CHEBI:49786"/>
        <label>2</label>
    </ligand>
</feature>
<feature type="binding site" evidence="1">
    <location>
        <position position="219"/>
    </location>
    <ligand>
        <name>substrate</name>
    </ligand>
</feature>
<feature type="binding site" evidence="1">
    <location>
        <position position="246"/>
    </location>
    <ligand>
        <name>Ni(2+)</name>
        <dbReference type="ChEBI" id="CHEBI:49786"/>
        <label>2</label>
    </ligand>
</feature>
<feature type="binding site" evidence="1">
    <location>
        <position position="272"/>
    </location>
    <ligand>
        <name>Ni(2+)</name>
        <dbReference type="ChEBI" id="CHEBI:49786"/>
        <label>2</label>
    </ligand>
</feature>
<feature type="binding site" evidence="1">
    <location>
        <position position="360"/>
    </location>
    <ligand>
        <name>Ni(2+)</name>
        <dbReference type="ChEBI" id="CHEBI:49786"/>
        <label>1</label>
    </ligand>
</feature>
<feature type="modified residue" description="N6-carboxylysine" evidence="1">
    <location>
        <position position="217"/>
    </location>
</feature>
<comment type="catalytic activity">
    <reaction evidence="1">
        <text>urea + 2 H2O + H(+) = hydrogencarbonate + 2 NH4(+)</text>
        <dbReference type="Rhea" id="RHEA:20557"/>
        <dbReference type="ChEBI" id="CHEBI:15377"/>
        <dbReference type="ChEBI" id="CHEBI:15378"/>
        <dbReference type="ChEBI" id="CHEBI:16199"/>
        <dbReference type="ChEBI" id="CHEBI:17544"/>
        <dbReference type="ChEBI" id="CHEBI:28938"/>
        <dbReference type="EC" id="3.5.1.5"/>
    </reaction>
</comment>
<comment type="cofactor">
    <cofactor evidence="1">
        <name>Ni cation</name>
        <dbReference type="ChEBI" id="CHEBI:25516"/>
    </cofactor>
    <text evidence="1">Binds 2 nickel ions per subunit.</text>
</comment>
<comment type="pathway">
    <text evidence="1">Nitrogen metabolism; urea degradation; CO(2) and NH(3) from urea (urease route): step 1/1.</text>
</comment>
<comment type="subunit">
    <text evidence="1">Heterotrimer of UreA (gamma), UreB (beta) and UreC (alpha) subunits. Three heterotrimers associate to form the active enzyme.</text>
</comment>
<comment type="subcellular location">
    <subcellularLocation>
        <location evidence="1">Cytoplasm</location>
    </subcellularLocation>
</comment>
<comment type="PTM">
    <text evidence="1">Carboxylation allows a single lysine to coordinate two nickel ions.</text>
</comment>
<comment type="similarity">
    <text evidence="1">Belongs to the metallo-dependent hydrolases superfamily. Urease alpha subunit family.</text>
</comment>
<gene>
    <name evidence="1" type="primary">ureC</name>
    <name type="ordered locus">HCH_04523</name>
</gene>
<proteinExistence type="inferred from homology"/>
<name>URE1_HAHCH</name>
<dbReference type="EC" id="3.5.1.5" evidence="1"/>
<dbReference type="EMBL" id="CP000155">
    <property type="protein sequence ID" value="ABC31223.1"/>
    <property type="molecule type" value="Genomic_DNA"/>
</dbReference>
<dbReference type="RefSeq" id="WP_011398290.1">
    <property type="nucleotide sequence ID" value="NC_007645.1"/>
</dbReference>
<dbReference type="SMR" id="Q2SDQ1"/>
<dbReference type="STRING" id="349521.HCH_04523"/>
<dbReference type="KEGG" id="hch:HCH_04523"/>
<dbReference type="eggNOG" id="COG0804">
    <property type="taxonomic scope" value="Bacteria"/>
</dbReference>
<dbReference type="HOGENOM" id="CLU_000980_0_0_6"/>
<dbReference type="OrthoDB" id="9802793at2"/>
<dbReference type="UniPathway" id="UPA00258">
    <property type="reaction ID" value="UER00370"/>
</dbReference>
<dbReference type="Proteomes" id="UP000000238">
    <property type="component" value="Chromosome"/>
</dbReference>
<dbReference type="GO" id="GO:0005737">
    <property type="term" value="C:cytoplasm"/>
    <property type="evidence" value="ECO:0007669"/>
    <property type="project" value="UniProtKB-SubCell"/>
</dbReference>
<dbReference type="GO" id="GO:0016151">
    <property type="term" value="F:nickel cation binding"/>
    <property type="evidence" value="ECO:0007669"/>
    <property type="project" value="UniProtKB-UniRule"/>
</dbReference>
<dbReference type="GO" id="GO:0009039">
    <property type="term" value="F:urease activity"/>
    <property type="evidence" value="ECO:0007669"/>
    <property type="project" value="UniProtKB-UniRule"/>
</dbReference>
<dbReference type="GO" id="GO:0043419">
    <property type="term" value="P:urea catabolic process"/>
    <property type="evidence" value="ECO:0007669"/>
    <property type="project" value="UniProtKB-UniRule"/>
</dbReference>
<dbReference type="CDD" id="cd00375">
    <property type="entry name" value="Urease_alpha"/>
    <property type="match status" value="1"/>
</dbReference>
<dbReference type="Gene3D" id="3.20.20.140">
    <property type="entry name" value="Metal-dependent hydrolases"/>
    <property type="match status" value="1"/>
</dbReference>
<dbReference type="Gene3D" id="2.30.40.10">
    <property type="entry name" value="Urease, subunit C, domain 1"/>
    <property type="match status" value="1"/>
</dbReference>
<dbReference type="HAMAP" id="MF_01953">
    <property type="entry name" value="Urease_alpha"/>
    <property type="match status" value="1"/>
</dbReference>
<dbReference type="InterPro" id="IPR006680">
    <property type="entry name" value="Amidohydro-rel"/>
</dbReference>
<dbReference type="InterPro" id="IPR011059">
    <property type="entry name" value="Metal-dep_hydrolase_composite"/>
</dbReference>
<dbReference type="InterPro" id="IPR032466">
    <property type="entry name" value="Metal_Hydrolase"/>
</dbReference>
<dbReference type="InterPro" id="IPR011612">
    <property type="entry name" value="Urease_alpha_N_dom"/>
</dbReference>
<dbReference type="InterPro" id="IPR050112">
    <property type="entry name" value="Urease_alpha_subunit"/>
</dbReference>
<dbReference type="InterPro" id="IPR017950">
    <property type="entry name" value="Urease_AS"/>
</dbReference>
<dbReference type="InterPro" id="IPR005848">
    <property type="entry name" value="Urease_asu"/>
</dbReference>
<dbReference type="InterPro" id="IPR017951">
    <property type="entry name" value="Urease_asu_c"/>
</dbReference>
<dbReference type="InterPro" id="IPR029754">
    <property type="entry name" value="Urease_Ni-bd"/>
</dbReference>
<dbReference type="NCBIfam" id="NF009685">
    <property type="entry name" value="PRK13206.1"/>
    <property type="match status" value="1"/>
</dbReference>
<dbReference type="NCBIfam" id="NF009686">
    <property type="entry name" value="PRK13207.1"/>
    <property type="match status" value="1"/>
</dbReference>
<dbReference type="NCBIfam" id="TIGR01792">
    <property type="entry name" value="urease_alph"/>
    <property type="match status" value="1"/>
</dbReference>
<dbReference type="PANTHER" id="PTHR43440">
    <property type="entry name" value="UREASE"/>
    <property type="match status" value="1"/>
</dbReference>
<dbReference type="PANTHER" id="PTHR43440:SF1">
    <property type="entry name" value="UREASE"/>
    <property type="match status" value="1"/>
</dbReference>
<dbReference type="Pfam" id="PF01979">
    <property type="entry name" value="Amidohydro_1"/>
    <property type="match status" value="1"/>
</dbReference>
<dbReference type="Pfam" id="PF00449">
    <property type="entry name" value="Urease_alpha"/>
    <property type="match status" value="1"/>
</dbReference>
<dbReference type="PRINTS" id="PR01752">
    <property type="entry name" value="UREASE"/>
</dbReference>
<dbReference type="SUPFAM" id="SSF51338">
    <property type="entry name" value="Composite domain of metallo-dependent hydrolases"/>
    <property type="match status" value="2"/>
</dbReference>
<dbReference type="SUPFAM" id="SSF51556">
    <property type="entry name" value="Metallo-dependent hydrolases"/>
    <property type="match status" value="1"/>
</dbReference>
<dbReference type="PROSITE" id="PS01120">
    <property type="entry name" value="UREASE_1"/>
    <property type="match status" value="1"/>
</dbReference>
<dbReference type="PROSITE" id="PS00145">
    <property type="entry name" value="UREASE_2"/>
    <property type="match status" value="1"/>
</dbReference>
<dbReference type="PROSITE" id="PS51368">
    <property type="entry name" value="UREASE_3"/>
    <property type="match status" value="1"/>
</dbReference>
<reference key="1">
    <citation type="journal article" date="2005" name="Nucleic Acids Res.">
        <title>Genomic blueprint of Hahella chejuensis, a marine microbe producing an algicidal agent.</title>
        <authorList>
            <person name="Jeong H."/>
            <person name="Yim J.H."/>
            <person name="Lee C."/>
            <person name="Choi S.-H."/>
            <person name="Park Y.K."/>
            <person name="Yoon S.H."/>
            <person name="Hur C.-G."/>
            <person name="Kang H.-Y."/>
            <person name="Kim D."/>
            <person name="Lee H.H."/>
            <person name="Park K.H."/>
            <person name="Park S.-H."/>
            <person name="Park H.-S."/>
            <person name="Lee H.K."/>
            <person name="Oh T.K."/>
            <person name="Kim J.F."/>
        </authorList>
    </citation>
    <scope>NUCLEOTIDE SEQUENCE [LARGE SCALE GENOMIC DNA]</scope>
    <source>
        <strain>KCTC 2396</strain>
    </source>
</reference>
<evidence type="ECO:0000255" key="1">
    <source>
        <dbReference type="HAMAP-Rule" id="MF_01953"/>
    </source>
</evidence>
<sequence length="567" mass="60924">MAKISRAAYADMFGPTVGDRVRLGDTELWIEVEKDYATYGHEVKFGGGKVIRDGMGQSQRPNTEAVDTVITNALILDHWGVVKADIGLKQGRIAAIGKAGNPDIQDNIDIIIGPGTEVIAGEGMIATAGGIDAHIHFICPQQIEEALMSGVTTMLGGGAGPATGTNATTCTPGPWHMGKMLQAADAFPMNLGFLGKGNASLPAALEEQMLAGAMGLKLHEDWGTTPASIDNCLNIAEKYDVQVAIHTDTLNESGFVEDTLAAFKGRTIHTYHTEGAGGGHAPDIIKACGELNVLPSSTNPTRPYTINTVDEHLDMLMVCHHLDPDIPEDVAFADSRIRKETIAAEDILHDLGAFSMISSDSQAMGRVGEVVCRTWQTAHKMKVQRGPLAQDSERADNFRAKRYIAKYTINPAIAHGIAHEVGSLEPGKLADIILWRPAFFGAKPSLIIKGGMIAAAPMGDANASIPTPQPVHYRPMFGAFGRAMQQTRLTFVCQAALDNGVKEQFGLQSPLSACRNTRTVTKKSMVLNDLTPQMEVDSQTYEVRANGELLVCEPAKVLPLAQRYFLF</sequence>
<organism>
    <name type="scientific">Hahella chejuensis (strain KCTC 2396)</name>
    <dbReference type="NCBI Taxonomy" id="349521"/>
    <lineage>
        <taxon>Bacteria</taxon>
        <taxon>Pseudomonadati</taxon>
        <taxon>Pseudomonadota</taxon>
        <taxon>Gammaproteobacteria</taxon>
        <taxon>Oceanospirillales</taxon>
        <taxon>Hahellaceae</taxon>
        <taxon>Hahella</taxon>
    </lineage>
</organism>
<protein>
    <recommendedName>
        <fullName evidence="1">Urease subunit alpha</fullName>
        <ecNumber evidence="1">3.5.1.5</ecNumber>
    </recommendedName>
    <alternativeName>
        <fullName evidence="1">Urea amidohydrolase subunit alpha</fullName>
    </alternativeName>
</protein>